<accession>P99078</accession>
<accession>Q99VC6</accession>
<sequence length="443" mass="49794">MTHIQLDFSKTLEFFGEHELKQQQEIVKSIHKTIHEGTGAGSDFLGWVDLPVDYDKEEFSRIVEASKRIKENSDVLVVIGIGGSYLGARAAIEMLTSSFRNSNEYPEIVFVGNHLSSTYTKELVDYLADKDFSVNVISKSGTTTEPAVAFRLFKQLVEERYGKEEAQKRIFATTDKEKGALKQLATNEGYETFIVPDDVGGRYSVLTAVGLLPIATAGINIEAMMIGAAKAREELSSDKLEDNIAYQYATIRNILYAKGYTTEMLINYEPSMQYFNEWWKQLFGESEGKDFKGIYPSSANYTTDLHSLGQYVQEGRRFLFETVVKVNHPKYDITIEKDSDDLDGLNYLAGKTIDEVNTKAFEGTLLAHTDGGVPNMVVNIPQLDEETFGYVVYFFELACAMSGYQLGVNPFNQPGVEAYKQNMFALLGKPGFEDLKKELEERL</sequence>
<gene>
    <name evidence="1" type="primary">pgi</name>
    <name type="ordered locus">SA0823</name>
</gene>
<proteinExistence type="evidence at protein level"/>
<reference key="1">
    <citation type="journal article" date="2001" name="Lancet">
        <title>Whole genome sequencing of meticillin-resistant Staphylococcus aureus.</title>
        <authorList>
            <person name="Kuroda M."/>
            <person name="Ohta T."/>
            <person name="Uchiyama I."/>
            <person name="Baba T."/>
            <person name="Yuzawa H."/>
            <person name="Kobayashi I."/>
            <person name="Cui L."/>
            <person name="Oguchi A."/>
            <person name="Aoki K."/>
            <person name="Nagai Y."/>
            <person name="Lian J.-Q."/>
            <person name="Ito T."/>
            <person name="Kanamori M."/>
            <person name="Matsumaru H."/>
            <person name="Maruyama A."/>
            <person name="Murakami H."/>
            <person name="Hosoyama A."/>
            <person name="Mizutani-Ui Y."/>
            <person name="Takahashi N.K."/>
            <person name="Sawano T."/>
            <person name="Inoue R."/>
            <person name="Kaito C."/>
            <person name="Sekimizu K."/>
            <person name="Hirakawa H."/>
            <person name="Kuhara S."/>
            <person name="Goto S."/>
            <person name="Yabuzaki J."/>
            <person name="Kanehisa M."/>
            <person name="Yamashita A."/>
            <person name="Oshima K."/>
            <person name="Furuya K."/>
            <person name="Yoshino C."/>
            <person name="Shiba T."/>
            <person name="Hattori M."/>
            <person name="Ogasawara N."/>
            <person name="Hayashi H."/>
            <person name="Hiramatsu K."/>
        </authorList>
    </citation>
    <scope>NUCLEOTIDE SEQUENCE [LARGE SCALE GENOMIC DNA]</scope>
    <source>
        <strain>N315</strain>
    </source>
</reference>
<reference key="2">
    <citation type="journal article" date="2005" name="J. Microbiol. Methods">
        <title>Correlation of proteomic and transcriptomic profiles of Staphylococcus aureus during the post-exponential phase of growth.</title>
        <authorList>
            <person name="Scherl A."/>
            <person name="Francois P."/>
            <person name="Bento M."/>
            <person name="Deshusses J.M."/>
            <person name="Charbonnier Y."/>
            <person name="Converset V."/>
            <person name="Huyghe A."/>
            <person name="Walter N."/>
            <person name="Hoogland C."/>
            <person name="Appel R.D."/>
            <person name="Sanchez J.-C."/>
            <person name="Zimmermann-Ivol C.G."/>
            <person name="Corthals G.L."/>
            <person name="Hochstrasser D.F."/>
            <person name="Schrenzel J."/>
        </authorList>
    </citation>
    <scope>IDENTIFICATION BY MASS SPECTROMETRY</scope>
    <source>
        <strain>N315</strain>
    </source>
</reference>
<reference key="3">
    <citation type="submission" date="2007-10" db="UniProtKB">
        <title>Shotgun proteomic analysis of total and membrane protein extracts of S. aureus strain N315.</title>
        <authorList>
            <person name="Vaezzadeh A.R."/>
            <person name="Deshusses J."/>
            <person name="Lescuyer P."/>
            <person name="Hochstrasser D.F."/>
        </authorList>
    </citation>
    <scope>IDENTIFICATION BY MASS SPECTROMETRY [LARGE SCALE ANALYSIS]</scope>
    <source>
        <strain>N315</strain>
    </source>
</reference>
<comment type="function">
    <text evidence="1">Catalyzes the reversible isomerization of glucose-6-phosphate to fructose-6-phosphate.</text>
</comment>
<comment type="catalytic activity">
    <reaction evidence="1">
        <text>alpha-D-glucose 6-phosphate = beta-D-fructose 6-phosphate</text>
        <dbReference type="Rhea" id="RHEA:11816"/>
        <dbReference type="ChEBI" id="CHEBI:57634"/>
        <dbReference type="ChEBI" id="CHEBI:58225"/>
        <dbReference type="EC" id="5.3.1.9"/>
    </reaction>
</comment>
<comment type="pathway">
    <text evidence="1">Carbohydrate biosynthesis; gluconeogenesis.</text>
</comment>
<comment type="pathway">
    <text evidence="1">Carbohydrate degradation; glycolysis; D-glyceraldehyde 3-phosphate and glycerone phosphate from D-glucose: step 2/4.</text>
</comment>
<comment type="subcellular location">
    <subcellularLocation>
        <location evidence="1">Cytoplasm</location>
    </subcellularLocation>
</comment>
<comment type="similarity">
    <text evidence="1">Belongs to the GPI family.</text>
</comment>
<evidence type="ECO:0000255" key="1">
    <source>
        <dbReference type="HAMAP-Rule" id="MF_00473"/>
    </source>
</evidence>
<keyword id="KW-0963">Cytoplasm</keyword>
<keyword id="KW-0312">Gluconeogenesis</keyword>
<keyword id="KW-0324">Glycolysis</keyword>
<keyword id="KW-0413">Isomerase</keyword>
<dbReference type="EC" id="5.3.1.9" evidence="1"/>
<dbReference type="EMBL" id="BA000018">
    <property type="protein sequence ID" value="BAB42062.1"/>
    <property type="molecule type" value="Genomic_DNA"/>
</dbReference>
<dbReference type="PIR" id="C89863">
    <property type="entry name" value="C89863"/>
</dbReference>
<dbReference type="RefSeq" id="WP_000148852.1">
    <property type="nucleotide sequence ID" value="NC_002745.2"/>
</dbReference>
<dbReference type="SMR" id="P99078"/>
<dbReference type="EnsemblBacteria" id="BAB42062">
    <property type="protein sequence ID" value="BAB42062"/>
    <property type="gene ID" value="BAB42062"/>
</dbReference>
<dbReference type="KEGG" id="sau:SA0823"/>
<dbReference type="HOGENOM" id="CLU_037303_0_1_9"/>
<dbReference type="UniPathway" id="UPA00109">
    <property type="reaction ID" value="UER00181"/>
</dbReference>
<dbReference type="UniPathway" id="UPA00138"/>
<dbReference type="GO" id="GO:0005829">
    <property type="term" value="C:cytosol"/>
    <property type="evidence" value="ECO:0007669"/>
    <property type="project" value="TreeGrafter"/>
</dbReference>
<dbReference type="GO" id="GO:0097367">
    <property type="term" value="F:carbohydrate derivative binding"/>
    <property type="evidence" value="ECO:0007669"/>
    <property type="project" value="InterPro"/>
</dbReference>
<dbReference type="GO" id="GO:0004347">
    <property type="term" value="F:glucose-6-phosphate isomerase activity"/>
    <property type="evidence" value="ECO:0007669"/>
    <property type="project" value="UniProtKB-UniRule"/>
</dbReference>
<dbReference type="GO" id="GO:0048029">
    <property type="term" value="F:monosaccharide binding"/>
    <property type="evidence" value="ECO:0007669"/>
    <property type="project" value="TreeGrafter"/>
</dbReference>
<dbReference type="GO" id="GO:0006094">
    <property type="term" value="P:gluconeogenesis"/>
    <property type="evidence" value="ECO:0007669"/>
    <property type="project" value="UniProtKB-UniRule"/>
</dbReference>
<dbReference type="GO" id="GO:0051156">
    <property type="term" value="P:glucose 6-phosphate metabolic process"/>
    <property type="evidence" value="ECO:0007669"/>
    <property type="project" value="TreeGrafter"/>
</dbReference>
<dbReference type="GO" id="GO:0006096">
    <property type="term" value="P:glycolytic process"/>
    <property type="evidence" value="ECO:0007669"/>
    <property type="project" value="UniProtKB-UniRule"/>
</dbReference>
<dbReference type="CDD" id="cd05015">
    <property type="entry name" value="SIS_PGI_1"/>
    <property type="match status" value="1"/>
</dbReference>
<dbReference type="CDD" id="cd05016">
    <property type="entry name" value="SIS_PGI_2"/>
    <property type="match status" value="1"/>
</dbReference>
<dbReference type="FunFam" id="3.40.50.10490:FF:000015">
    <property type="entry name" value="Glucose-6-phosphate isomerase"/>
    <property type="match status" value="1"/>
</dbReference>
<dbReference type="FunFam" id="3.40.50.10490:FF:000016">
    <property type="entry name" value="Glucose-6-phosphate isomerase"/>
    <property type="match status" value="1"/>
</dbReference>
<dbReference type="Gene3D" id="3.40.50.10490">
    <property type="entry name" value="Glucose-6-phosphate isomerase like protein, domain 1"/>
    <property type="match status" value="3"/>
</dbReference>
<dbReference type="HAMAP" id="MF_00473">
    <property type="entry name" value="G6P_isomerase"/>
    <property type="match status" value="1"/>
</dbReference>
<dbReference type="InterPro" id="IPR001672">
    <property type="entry name" value="G6P_Isomerase"/>
</dbReference>
<dbReference type="InterPro" id="IPR018189">
    <property type="entry name" value="Phosphoglucose_isomerase_CS"/>
</dbReference>
<dbReference type="InterPro" id="IPR046348">
    <property type="entry name" value="SIS_dom_sf"/>
</dbReference>
<dbReference type="InterPro" id="IPR035476">
    <property type="entry name" value="SIS_PGI_1"/>
</dbReference>
<dbReference type="InterPro" id="IPR035482">
    <property type="entry name" value="SIS_PGI_2"/>
</dbReference>
<dbReference type="NCBIfam" id="NF010697">
    <property type="entry name" value="PRK14097.1"/>
    <property type="match status" value="1"/>
</dbReference>
<dbReference type="PANTHER" id="PTHR11469">
    <property type="entry name" value="GLUCOSE-6-PHOSPHATE ISOMERASE"/>
    <property type="match status" value="1"/>
</dbReference>
<dbReference type="PANTHER" id="PTHR11469:SF1">
    <property type="entry name" value="GLUCOSE-6-PHOSPHATE ISOMERASE"/>
    <property type="match status" value="1"/>
</dbReference>
<dbReference type="Pfam" id="PF00342">
    <property type="entry name" value="PGI"/>
    <property type="match status" value="1"/>
</dbReference>
<dbReference type="PRINTS" id="PR00662">
    <property type="entry name" value="G6PISOMERASE"/>
</dbReference>
<dbReference type="SUPFAM" id="SSF53697">
    <property type="entry name" value="SIS domain"/>
    <property type="match status" value="1"/>
</dbReference>
<dbReference type="PROSITE" id="PS00765">
    <property type="entry name" value="P_GLUCOSE_ISOMERASE_1"/>
    <property type="match status" value="1"/>
</dbReference>
<dbReference type="PROSITE" id="PS00174">
    <property type="entry name" value="P_GLUCOSE_ISOMERASE_2"/>
    <property type="match status" value="1"/>
</dbReference>
<dbReference type="PROSITE" id="PS51463">
    <property type="entry name" value="P_GLUCOSE_ISOMERASE_3"/>
    <property type="match status" value="1"/>
</dbReference>
<protein>
    <recommendedName>
        <fullName evidence="1">Glucose-6-phosphate isomerase</fullName>
        <shortName evidence="1">GPI</shortName>
        <ecNumber evidence="1">5.3.1.9</ecNumber>
    </recommendedName>
    <alternativeName>
        <fullName evidence="1">Phosphoglucose isomerase</fullName>
        <shortName evidence="1">PGI</shortName>
    </alternativeName>
    <alternativeName>
        <fullName evidence="1">Phosphohexose isomerase</fullName>
        <shortName evidence="1">PHI</shortName>
    </alternativeName>
</protein>
<organism>
    <name type="scientific">Staphylococcus aureus (strain N315)</name>
    <dbReference type="NCBI Taxonomy" id="158879"/>
    <lineage>
        <taxon>Bacteria</taxon>
        <taxon>Bacillati</taxon>
        <taxon>Bacillota</taxon>
        <taxon>Bacilli</taxon>
        <taxon>Bacillales</taxon>
        <taxon>Staphylococcaceae</taxon>
        <taxon>Staphylococcus</taxon>
    </lineage>
</organism>
<name>G6PI_STAAN</name>
<feature type="chain" id="PRO_0000180731" description="Glucose-6-phosphate isomerase">
    <location>
        <begin position="1"/>
        <end position="443"/>
    </location>
</feature>
<feature type="active site" description="Proton donor" evidence="1">
    <location>
        <position position="285"/>
    </location>
</feature>
<feature type="active site" evidence="1">
    <location>
        <position position="306"/>
    </location>
</feature>
<feature type="active site" evidence="1">
    <location>
        <position position="420"/>
    </location>
</feature>